<comment type="catalytic activity">
    <reaction evidence="1">
        <text>tRNA(His) + L-histidine + ATP = L-histidyl-tRNA(His) + AMP + diphosphate + H(+)</text>
        <dbReference type="Rhea" id="RHEA:17313"/>
        <dbReference type="Rhea" id="RHEA-COMP:9665"/>
        <dbReference type="Rhea" id="RHEA-COMP:9689"/>
        <dbReference type="ChEBI" id="CHEBI:15378"/>
        <dbReference type="ChEBI" id="CHEBI:30616"/>
        <dbReference type="ChEBI" id="CHEBI:33019"/>
        <dbReference type="ChEBI" id="CHEBI:57595"/>
        <dbReference type="ChEBI" id="CHEBI:78442"/>
        <dbReference type="ChEBI" id="CHEBI:78527"/>
        <dbReference type="ChEBI" id="CHEBI:456215"/>
        <dbReference type="EC" id="6.1.1.21"/>
    </reaction>
</comment>
<comment type="subunit">
    <text evidence="1">Homodimer.</text>
</comment>
<comment type="subcellular location">
    <subcellularLocation>
        <location evidence="1">Cytoplasm</location>
    </subcellularLocation>
</comment>
<comment type="similarity">
    <text evidence="1">Belongs to the class-II aminoacyl-tRNA synthetase family.</text>
</comment>
<sequence>MAQKIQSVKGMNDLLPVEQKDFKLTAAFWQAFEDTVGRWTRTYGYQQIRTPIVEQTGLFVRSIGEETDVVGKEMYTFSDSNDSLSLSLRPEGTASCLRAVVEHNFLYNSPQKLWYMGPMFRRERPQKGRYRQFHQVGIEALGFEGPDIDAEIIAMSADLWEKLGIREYLTLEINSLGNREERAAHRAALVEYLTRYEDKLDEDSKRRLKTNPLRVLDTKNPDLQEICNAAPRLVDYLGEASQNHYARFKAMLDGLGIQYIENPRLVRGLDYYNQTVFEWTTDKLGAQATVCGGGRYDGLIEELGGKPAPSIGFAMGIERLLLLVSEYGSLEVNAAPDVYAMHQGEGADLQVMKYAQALRAQGFNVMQHSGYQSLKAQMKKADNSGARFALIVAQDELANGTVTLKDMNGAHDQQTVAAADLTNTLQQWKNA</sequence>
<evidence type="ECO:0000255" key="1">
    <source>
        <dbReference type="HAMAP-Rule" id="MF_00127"/>
    </source>
</evidence>
<reference key="1">
    <citation type="journal article" date="2000" name="Nature">
        <title>Complete DNA sequence of a serogroup A strain of Neisseria meningitidis Z2491.</title>
        <authorList>
            <person name="Parkhill J."/>
            <person name="Achtman M."/>
            <person name="James K.D."/>
            <person name="Bentley S.D."/>
            <person name="Churcher C.M."/>
            <person name="Klee S.R."/>
            <person name="Morelli G."/>
            <person name="Basham D."/>
            <person name="Brown D."/>
            <person name="Chillingworth T."/>
            <person name="Davies R.M."/>
            <person name="Davis P."/>
            <person name="Devlin K."/>
            <person name="Feltwell T."/>
            <person name="Hamlin N."/>
            <person name="Holroyd S."/>
            <person name="Jagels K."/>
            <person name="Leather S."/>
            <person name="Moule S."/>
            <person name="Mungall K.L."/>
            <person name="Quail M.A."/>
            <person name="Rajandream M.A."/>
            <person name="Rutherford K.M."/>
            <person name="Simmonds M."/>
            <person name="Skelton J."/>
            <person name="Whitehead S."/>
            <person name="Spratt B.G."/>
            <person name="Barrell B.G."/>
        </authorList>
    </citation>
    <scope>NUCLEOTIDE SEQUENCE [LARGE SCALE GENOMIC DNA]</scope>
    <source>
        <strain>DSM 15465 / Z2491</strain>
    </source>
</reference>
<organism>
    <name type="scientific">Neisseria meningitidis serogroup A / serotype 4A (strain DSM 15465 / Z2491)</name>
    <dbReference type="NCBI Taxonomy" id="122587"/>
    <lineage>
        <taxon>Bacteria</taxon>
        <taxon>Pseudomonadati</taxon>
        <taxon>Pseudomonadota</taxon>
        <taxon>Betaproteobacteria</taxon>
        <taxon>Neisseriales</taxon>
        <taxon>Neisseriaceae</taxon>
        <taxon>Neisseria</taxon>
    </lineage>
</organism>
<proteinExistence type="inferred from homology"/>
<name>SYH_NEIMA</name>
<dbReference type="EC" id="6.1.1.21" evidence="1"/>
<dbReference type="EMBL" id="AL157959">
    <property type="protein sequence ID" value="CAM08279.1"/>
    <property type="molecule type" value="Genomic_DNA"/>
</dbReference>
<dbReference type="PIR" id="G81871">
    <property type="entry name" value="G81871"/>
</dbReference>
<dbReference type="RefSeq" id="WP_010981154.1">
    <property type="nucleotide sequence ID" value="NC_003116.1"/>
</dbReference>
<dbReference type="SMR" id="Q9JUZ9"/>
<dbReference type="EnsemblBacteria" id="CAM08279">
    <property type="protein sequence ID" value="CAM08279"/>
    <property type="gene ID" value="NMA1065"/>
</dbReference>
<dbReference type="KEGG" id="nma:NMA1065"/>
<dbReference type="HOGENOM" id="CLU_025113_1_1_4"/>
<dbReference type="Proteomes" id="UP000000626">
    <property type="component" value="Chromosome"/>
</dbReference>
<dbReference type="GO" id="GO:0005737">
    <property type="term" value="C:cytoplasm"/>
    <property type="evidence" value="ECO:0007669"/>
    <property type="project" value="UniProtKB-SubCell"/>
</dbReference>
<dbReference type="GO" id="GO:0005524">
    <property type="term" value="F:ATP binding"/>
    <property type="evidence" value="ECO:0007669"/>
    <property type="project" value="UniProtKB-UniRule"/>
</dbReference>
<dbReference type="GO" id="GO:0004821">
    <property type="term" value="F:histidine-tRNA ligase activity"/>
    <property type="evidence" value="ECO:0007669"/>
    <property type="project" value="UniProtKB-UniRule"/>
</dbReference>
<dbReference type="GO" id="GO:0006427">
    <property type="term" value="P:histidyl-tRNA aminoacylation"/>
    <property type="evidence" value="ECO:0007669"/>
    <property type="project" value="UniProtKB-UniRule"/>
</dbReference>
<dbReference type="CDD" id="cd00773">
    <property type="entry name" value="HisRS-like_core"/>
    <property type="match status" value="1"/>
</dbReference>
<dbReference type="CDD" id="cd00859">
    <property type="entry name" value="HisRS_anticodon"/>
    <property type="match status" value="1"/>
</dbReference>
<dbReference type="FunFam" id="3.30.930.10:FF:000005">
    <property type="entry name" value="Histidine--tRNA ligase"/>
    <property type="match status" value="1"/>
</dbReference>
<dbReference type="Gene3D" id="3.40.50.800">
    <property type="entry name" value="Anticodon-binding domain"/>
    <property type="match status" value="1"/>
</dbReference>
<dbReference type="Gene3D" id="3.30.930.10">
    <property type="entry name" value="Bira Bifunctional Protein, Domain 2"/>
    <property type="match status" value="1"/>
</dbReference>
<dbReference type="HAMAP" id="MF_00127">
    <property type="entry name" value="His_tRNA_synth"/>
    <property type="match status" value="1"/>
</dbReference>
<dbReference type="InterPro" id="IPR006195">
    <property type="entry name" value="aa-tRNA-synth_II"/>
</dbReference>
<dbReference type="InterPro" id="IPR045864">
    <property type="entry name" value="aa-tRNA-synth_II/BPL/LPL"/>
</dbReference>
<dbReference type="InterPro" id="IPR004154">
    <property type="entry name" value="Anticodon-bd"/>
</dbReference>
<dbReference type="InterPro" id="IPR036621">
    <property type="entry name" value="Anticodon-bd_dom_sf"/>
</dbReference>
<dbReference type="InterPro" id="IPR015807">
    <property type="entry name" value="His-tRNA-ligase"/>
</dbReference>
<dbReference type="InterPro" id="IPR041715">
    <property type="entry name" value="HisRS-like_core"/>
</dbReference>
<dbReference type="InterPro" id="IPR004516">
    <property type="entry name" value="HisRS/HisZ"/>
</dbReference>
<dbReference type="InterPro" id="IPR033656">
    <property type="entry name" value="HisRS_anticodon"/>
</dbReference>
<dbReference type="NCBIfam" id="TIGR00442">
    <property type="entry name" value="hisS"/>
    <property type="match status" value="1"/>
</dbReference>
<dbReference type="PANTHER" id="PTHR43707:SF1">
    <property type="entry name" value="HISTIDINE--TRNA LIGASE, MITOCHONDRIAL-RELATED"/>
    <property type="match status" value="1"/>
</dbReference>
<dbReference type="PANTHER" id="PTHR43707">
    <property type="entry name" value="HISTIDYL-TRNA SYNTHETASE"/>
    <property type="match status" value="1"/>
</dbReference>
<dbReference type="Pfam" id="PF03129">
    <property type="entry name" value="HGTP_anticodon"/>
    <property type="match status" value="1"/>
</dbReference>
<dbReference type="Pfam" id="PF13393">
    <property type="entry name" value="tRNA-synt_His"/>
    <property type="match status" value="1"/>
</dbReference>
<dbReference type="PIRSF" id="PIRSF001549">
    <property type="entry name" value="His-tRNA_synth"/>
    <property type="match status" value="1"/>
</dbReference>
<dbReference type="SUPFAM" id="SSF52954">
    <property type="entry name" value="Class II aaRS ABD-related"/>
    <property type="match status" value="1"/>
</dbReference>
<dbReference type="SUPFAM" id="SSF55681">
    <property type="entry name" value="Class II aaRS and biotin synthetases"/>
    <property type="match status" value="1"/>
</dbReference>
<dbReference type="PROSITE" id="PS50862">
    <property type="entry name" value="AA_TRNA_LIGASE_II"/>
    <property type="match status" value="1"/>
</dbReference>
<gene>
    <name evidence="1" type="primary">hisS</name>
    <name type="ordered locus">NMA1065</name>
</gene>
<accession>Q9JUZ9</accession>
<accession>A1IR93</accession>
<keyword id="KW-0030">Aminoacyl-tRNA synthetase</keyword>
<keyword id="KW-0067">ATP-binding</keyword>
<keyword id="KW-0963">Cytoplasm</keyword>
<keyword id="KW-0436">Ligase</keyword>
<keyword id="KW-0547">Nucleotide-binding</keyword>
<keyword id="KW-0648">Protein biosynthesis</keyword>
<protein>
    <recommendedName>
        <fullName evidence="1">Histidine--tRNA ligase</fullName>
        <ecNumber evidence="1">6.1.1.21</ecNumber>
    </recommendedName>
    <alternativeName>
        <fullName evidence="1">Histidyl-tRNA synthetase</fullName>
        <shortName evidence="1">HisRS</shortName>
    </alternativeName>
</protein>
<feature type="chain" id="PRO_0000136209" description="Histidine--tRNA ligase">
    <location>
        <begin position="1"/>
        <end position="431"/>
    </location>
</feature>